<proteinExistence type="inferred from homology"/>
<protein>
    <recommendedName>
        <fullName>CCR4-associated factor 4</fullName>
    </recommendedName>
</protein>
<reference key="1">
    <citation type="journal article" date="2007" name="Proc. Natl. Acad. Sci. U.S.A.">
        <title>Genome sequencing and comparative analysis of Saccharomyces cerevisiae strain YJM789.</title>
        <authorList>
            <person name="Wei W."/>
            <person name="McCusker J.H."/>
            <person name="Hyman R.W."/>
            <person name="Jones T."/>
            <person name="Ning Y."/>
            <person name="Cao Z."/>
            <person name="Gu Z."/>
            <person name="Bruno D."/>
            <person name="Miranda M."/>
            <person name="Nguyen M."/>
            <person name="Wilhelmy J."/>
            <person name="Komp C."/>
            <person name="Tamse R."/>
            <person name="Wang X."/>
            <person name="Jia P."/>
            <person name="Luedi P."/>
            <person name="Oefner P.J."/>
            <person name="David L."/>
            <person name="Dietrich F.S."/>
            <person name="Li Y."/>
            <person name="Davis R.W."/>
            <person name="Steinmetz L.M."/>
        </authorList>
    </citation>
    <scope>NUCLEOTIDE SEQUENCE [LARGE SCALE GENOMIC DNA]</scope>
    <source>
        <strain>YJM789</strain>
    </source>
</reference>
<feature type="chain" id="PRO_0000330093" description="CCR4-associated factor 4">
    <location>
        <begin position="1"/>
        <end position="645"/>
    </location>
</feature>
<feature type="repeat" description="WD 1">
    <location>
        <begin position="319"/>
        <end position="359"/>
    </location>
</feature>
<feature type="repeat" description="WD 2">
    <location>
        <begin position="362"/>
        <end position="402"/>
    </location>
</feature>
<feature type="repeat" description="WD 3">
    <location>
        <begin position="424"/>
        <end position="463"/>
    </location>
</feature>
<feature type="repeat" description="WD 4">
    <location>
        <begin position="481"/>
        <end position="528"/>
    </location>
</feature>
<feature type="repeat" description="WD 5">
    <location>
        <begin position="529"/>
        <end position="568"/>
    </location>
</feature>
<feature type="repeat" description="WD 6">
    <location>
        <begin position="570"/>
        <end position="605"/>
    </location>
</feature>
<feature type="repeat" description="WD 7">
    <location>
        <begin position="616"/>
        <end position="645"/>
    </location>
</feature>
<feature type="region of interest" description="Required for interaction with FIS1 and MDV1" evidence="1">
    <location>
        <begin position="1"/>
        <end position="274"/>
    </location>
</feature>
<feature type="region of interest" description="Sufficient for interaction with FIS1" evidence="1">
    <location>
        <begin position="74"/>
        <end position="126"/>
    </location>
</feature>
<feature type="region of interest" description="Disordered" evidence="3">
    <location>
        <begin position="242"/>
        <end position="262"/>
    </location>
</feature>
<feature type="coiled-coil region" evidence="2">
    <location>
        <begin position="160"/>
        <end position="253"/>
    </location>
</feature>
<feature type="compositionally biased region" description="Basic and acidic residues" evidence="3">
    <location>
        <begin position="242"/>
        <end position="254"/>
    </location>
</feature>
<name>CAF4_YEAS7</name>
<accession>A6ZZZ8</accession>
<comment type="function">
    <text evidence="1">Involved in mitochondrial fission. Has a partially redundant function to MDV1 in acting as an adapter protein, binding to FIS1 on the mitochondrial outer membrane and recruiting the dynamin-like GTPase DNM1 to form mitochondrial fission complexes. Plays a key role in determining the polarized localization of those DNM1 clusters that are not immediately involved in the mitochondrial fission process (By similarity).</text>
</comment>
<comment type="subunit">
    <text evidence="1">Interacts with DNM1, FIS1 and MDV1, components of the mitochondrial fission machinery. Interacts via its WD repeats with DNM1. Interacts with CCR4 and NOT1, components of the CCR4-NOT complex. It is however not a component of the 1.0 MDa CCR4-NOT core complex, but appears to be part of a less characterized, 1.9 MDa CCR4-NOT complex. Interacts with DBF2, another likely component of the 1.9 MDa complex. Interacts with SRB9 and SRB10, components of the SRB8-11 complex (By similarity).</text>
</comment>
<comment type="subcellular location">
    <subcellularLocation>
        <location evidence="1">Mitochondrion outer membrane</location>
        <topology evidence="1">Peripheral membrane protein</topology>
        <orientation evidence="1">Cytoplasmic side</orientation>
    </subcellularLocation>
    <text evidence="1">Uniformly distributed on the cytoplasmic face of the mitochondrial outer membrane. This localization is dependent on FIS1. Reorganizes to punctate structures on mitochondria, corresponding to mitochondrial constriction sites, at a late step in mitochondrial division (By similarity).</text>
</comment>
<comment type="similarity">
    <text evidence="4">Belongs to the WD repeat MDV1/CAF4 family.</text>
</comment>
<comment type="sequence caution" evidence="4">
    <conflict type="erroneous initiation">
        <sequence resource="EMBL-CDS" id="EDN59941"/>
    </conflict>
</comment>
<sequence>MGSGDTRGESSLVAKPIEIILNKLPHAILAQQQFQKYITSPIYRYLSKLLLFREVAWPESTKDTQKGQVGIFSFQNNYADSATTFRILAHLDEQRYPLPNGAAEKNLPSLFEGFKATVSIIQQRLLLDNVDGATNSDKEKYVQLPDINTGFVNKTYSRIDLTHLLEDVETNVENLSINKTLEMDELTRLDSMINELESRKLKILERVKHIDSKSTNLENDVTLIKDRINFIEEYSLEADREQSLRKQMEEERSSEASSFTQNEEAISSLYDVESKDTRLKDFYKMPHEKSHDKNRQMHIISETYSRNSTAFRMTIPHGEHGNSITALDFDTPWGTLCSSSYQDRIVKVWDLNHGIQVGELPGHLATVNCMQIDKKNYNMLITGSKDATLKLWDLNLSRELYLDHSPLKEKTEEIVTPCIHNFELHKDEITALSFDSEALVSGSRDKKIFHWDLTTGKCIQQLDLIFTPTHSDIKMPARSLNNGTCLLGTEAPMIGALQCYNSALATGTKDGLVRLWDLRVGKPVRLLEGHTDGITSLKFDSEKLVTGSMDNSVRIWDLRTSSILDVIAYDLPVSSLDFDGKLITVGANEGGVNVFNMERDEHWMTPEPPHSLDGDELSRRIAIVKYKDGFLINGHNDGDINVWTL</sequence>
<organism>
    <name type="scientific">Saccharomyces cerevisiae (strain YJM789)</name>
    <name type="common">Baker's yeast</name>
    <dbReference type="NCBI Taxonomy" id="307796"/>
    <lineage>
        <taxon>Eukaryota</taxon>
        <taxon>Fungi</taxon>
        <taxon>Dikarya</taxon>
        <taxon>Ascomycota</taxon>
        <taxon>Saccharomycotina</taxon>
        <taxon>Saccharomycetes</taxon>
        <taxon>Saccharomycetales</taxon>
        <taxon>Saccharomycetaceae</taxon>
        <taxon>Saccharomyces</taxon>
    </lineage>
</organism>
<keyword id="KW-0175">Coiled coil</keyword>
<keyword id="KW-0472">Membrane</keyword>
<keyword id="KW-0496">Mitochondrion</keyword>
<keyword id="KW-1000">Mitochondrion outer membrane</keyword>
<keyword id="KW-0677">Repeat</keyword>
<keyword id="KW-0853">WD repeat</keyword>
<gene>
    <name type="primary">CAF4</name>
    <name type="ORF">SCY_3408</name>
</gene>
<evidence type="ECO:0000250" key="1"/>
<evidence type="ECO:0000255" key="2"/>
<evidence type="ECO:0000256" key="3">
    <source>
        <dbReference type="SAM" id="MobiDB-lite"/>
    </source>
</evidence>
<evidence type="ECO:0000305" key="4"/>
<dbReference type="EMBL" id="AAFW02000152">
    <property type="protein sequence ID" value="EDN59941.1"/>
    <property type="status" value="ALT_INIT"/>
    <property type="molecule type" value="Genomic_DNA"/>
</dbReference>
<dbReference type="SMR" id="A6ZZZ8"/>
<dbReference type="HOGENOM" id="CLU_012350_1_0_1"/>
<dbReference type="OrthoDB" id="19378at4893"/>
<dbReference type="Proteomes" id="UP000007060">
    <property type="component" value="Unassembled WGS sequence"/>
</dbReference>
<dbReference type="GO" id="GO:0005741">
    <property type="term" value="C:mitochondrial outer membrane"/>
    <property type="evidence" value="ECO:0007669"/>
    <property type="project" value="UniProtKB-SubCell"/>
</dbReference>
<dbReference type="GO" id="GO:0000266">
    <property type="term" value="P:mitochondrial fission"/>
    <property type="evidence" value="ECO:0007669"/>
    <property type="project" value="InterPro"/>
</dbReference>
<dbReference type="CDD" id="cd22881">
    <property type="entry name" value="Mdv1_N"/>
    <property type="match status" value="1"/>
</dbReference>
<dbReference type="CDD" id="cd00200">
    <property type="entry name" value="WD40"/>
    <property type="match status" value="1"/>
</dbReference>
<dbReference type="FunFam" id="2.130.10.10:FF:001400">
    <property type="entry name" value="CCR4-associated factor 4"/>
    <property type="match status" value="1"/>
</dbReference>
<dbReference type="Gene3D" id="1.20.5.170">
    <property type="match status" value="1"/>
</dbReference>
<dbReference type="Gene3D" id="6.10.250.1070">
    <property type="match status" value="1"/>
</dbReference>
<dbReference type="Gene3D" id="2.130.10.10">
    <property type="entry name" value="YVTN repeat-like/Quinoprotein amine dehydrogenase"/>
    <property type="match status" value="2"/>
</dbReference>
<dbReference type="InterPro" id="IPR021653">
    <property type="entry name" value="Caf4"/>
</dbReference>
<dbReference type="InterPro" id="IPR020472">
    <property type="entry name" value="G-protein_beta_WD-40_rep"/>
</dbReference>
<dbReference type="InterPro" id="IPR015943">
    <property type="entry name" value="WD40/YVTN_repeat-like_dom_sf"/>
</dbReference>
<dbReference type="InterPro" id="IPR019775">
    <property type="entry name" value="WD40_repeat_CS"/>
</dbReference>
<dbReference type="InterPro" id="IPR036322">
    <property type="entry name" value="WD40_repeat_dom_sf"/>
</dbReference>
<dbReference type="InterPro" id="IPR001680">
    <property type="entry name" value="WD40_rpt"/>
</dbReference>
<dbReference type="PANTHER" id="PTHR19848:SF8">
    <property type="entry name" value="F-BOX AND WD REPEAT DOMAIN CONTAINING 7"/>
    <property type="match status" value="1"/>
</dbReference>
<dbReference type="PANTHER" id="PTHR19848">
    <property type="entry name" value="WD40 REPEAT PROTEIN"/>
    <property type="match status" value="1"/>
</dbReference>
<dbReference type="Pfam" id="PF11615">
    <property type="entry name" value="Caf4"/>
    <property type="match status" value="1"/>
</dbReference>
<dbReference type="Pfam" id="PF00400">
    <property type="entry name" value="WD40"/>
    <property type="match status" value="4"/>
</dbReference>
<dbReference type="PRINTS" id="PR00320">
    <property type="entry name" value="GPROTEINBRPT"/>
</dbReference>
<dbReference type="SMART" id="SM00320">
    <property type="entry name" value="WD40"/>
    <property type="match status" value="7"/>
</dbReference>
<dbReference type="SUPFAM" id="SSF50978">
    <property type="entry name" value="WD40 repeat-like"/>
    <property type="match status" value="1"/>
</dbReference>
<dbReference type="PROSITE" id="PS00678">
    <property type="entry name" value="WD_REPEATS_1"/>
    <property type="match status" value="4"/>
</dbReference>
<dbReference type="PROSITE" id="PS50082">
    <property type="entry name" value="WD_REPEATS_2"/>
    <property type="match status" value="5"/>
</dbReference>
<dbReference type="PROSITE" id="PS50294">
    <property type="entry name" value="WD_REPEATS_REGION"/>
    <property type="match status" value="1"/>
</dbReference>